<proteinExistence type="evidence at protein level"/>
<gene>
    <name type="ORF">ORF3</name>
</gene>
<accession>P69616</accession>
<accession>P29325</accession>
<dbReference type="EMBL" id="M73218">
    <property type="protein sequence ID" value="AAA45735.1"/>
    <property type="status" value="ALT_INIT"/>
    <property type="molecule type" value="Genomic_RNA"/>
</dbReference>
<dbReference type="PIR" id="B40778">
    <property type="entry name" value="VHWWHE"/>
</dbReference>
<dbReference type="PDB" id="2ZZQ">
    <property type="method" value="X-ray"/>
    <property type="resolution" value="3.81 A"/>
    <property type="chains" value="A=61-114"/>
</dbReference>
<dbReference type="PDBsum" id="2ZZQ"/>
<dbReference type="IntAct" id="P69616">
    <property type="interactions" value="1"/>
</dbReference>
<dbReference type="MINT" id="P69616"/>
<dbReference type="Proteomes" id="UP000007243">
    <property type="component" value="Segment"/>
</dbReference>
<dbReference type="GO" id="GO:0044167">
    <property type="term" value="C:host cell endoplasmic reticulum membrane"/>
    <property type="evidence" value="ECO:0007669"/>
    <property type="project" value="UniProtKB-SubCell"/>
</dbReference>
<dbReference type="GO" id="GO:0020002">
    <property type="term" value="C:host cell plasma membrane"/>
    <property type="evidence" value="ECO:0007669"/>
    <property type="project" value="UniProtKB-SubCell"/>
</dbReference>
<dbReference type="GO" id="GO:0044163">
    <property type="term" value="C:host cytoskeleton"/>
    <property type="evidence" value="ECO:0007669"/>
    <property type="project" value="UniProtKB-SubCell"/>
</dbReference>
<dbReference type="GO" id="GO:0016020">
    <property type="term" value="C:membrane"/>
    <property type="evidence" value="ECO:0007669"/>
    <property type="project" value="UniProtKB-KW"/>
</dbReference>
<dbReference type="GO" id="GO:0044423">
    <property type="term" value="C:virion component"/>
    <property type="evidence" value="ECO:0007669"/>
    <property type="project" value="UniProtKB-KW"/>
</dbReference>
<dbReference type="GO" id="GO:0052170">
    <property type="term" value="P:symbiont-mediated suppression of host innate immune response"/>
    <property type="evidence" value="ECO:0007669"/>
    <property type="project" value="UniProtKB-KW"/>
</dbReference>
<dbReference type="InterPro" id="IPR003384">
    <property type="entry name" value="HEV_Orf2"/>
</dbReference>
<dbReference type="Pfam" id="PF02444">
    <property type="entry name" value="HEV_ORF1"/>
    <property type="match status" value="1"/>
</dbReference>
<protein>
    <recommendedName>
        <fullName>Protein ORF3</fullName>
        <shortName>pORF3</shortName>
    </recommendedName>
</protein>
<sequence>MGSRPCALGLFCCCSSCFCLCCPRHRPVSRLAAVVGGAAAVPAVVSGVTGLILSPSQSPIFIQPTPSPPMSPLRPGLDLVFANPPDHSAPLGVTRPSAPPLPHVVDLPQLGPRR</sequence>
<name>ORF3_HEVBU</name>
<organism>
    <name type="scientific">Hepatitis E virus genotype 1 (isolate Human/Burma)</name>
    <name type="common">HEV-1</name>
    <dbReference type="NCBI Taxonomy" id="31767"/>
    <lineage>
        <taxon>Viruses</taxon>
        <taxon>Riboviria</taxon>
        <taxon>Orthornavirae</taxon>
        <taxon>Kitrinoviricota</taxon>
        <taxon>Alsuviricetes</taxon>
        <taxon>Hepelivirales</taxon>
        <taxon>Hepeviridae</taxon>
        <taxon>Orthohepevirinae</taxon>
        <taxon>Paslahepevirus</taxon>
        <taxon>Hepatitis E virus</taxon>
    </lineage>
</organism>
<feature type="chain" id="PRO_0000100136" description="Protein ORF3">
    <location>
        <begin position="1"/>
        <end position="114"/>
    </location>
</feature>
<feature type="region of interest" description="Hydrophobic">
    <location>
        <begin position="6"/>
        <end position="22"/>
    </location>
</feature>
<feature type="region of interest" description="Interaction with host HPX" evidence="1">
    <location>
        <begin position="28"/>
        <end position="68"/>
    </location>
</feature>
<feature type="region of interest" description="Hydrophobic">
    <location>
        <begin position="33"/>
        <end position="53"/>
    </location>
</feature>
<feature type="region of interest" description="Interaction with the capsid protein" evidence="1">
    <location>
        <begin position="48"/>
        <end position="72"/>
    </location>
</feature>
<feature type="region of interest" description="Homodimerization, and interaction with host AMBP/bikunin" evidence="1">
    <location>
        <begin position="72"/>
        <end position="114"/>
    </location>
</feature>
<feature type="region of interest" description="Disordered" evidence="4">
    <location>
        <begin position="91"/>
        <end position="114"/>
    </location>
</feature>
<feature type="region of interest" description="Interaction with host SRC, HCK, FYN, PIK3R3 and GRB2" evidence="1">
    <location>
        <begin position="95"/>
        <end position="104"/>
    </location>
</feature>
<feature type="short sequence motif" description="PTAP/PSAP motif" evidence="3">
    <location>
        <begin position="96"/>
        <end position="99"/>
    </location>
</feature>
<feature type="modified residue" description="Phosphoserine; by host" evidence="2">
    <location>
        <position position="71"/>
    </location>
</feature>
<organismHost>
    <name type="scientific">Homo sapiens</name>
    <name type="common">Human</name>
    <dbReference type="NCBI Taxonomy" id="9606"/>
</organismHost>
<comment type="function">
    <text evidence="3">Small multifunctional phosphoprotein involved in virion morphogenesis, egress and counteracting host innate immunity. Plays critical roles in the final steps of viral release by interacting with host TSG101, a member of the vacuolar protein-sorting pathway and using other cellular host proteins involved in vesicle formation pathway. Also acts as a viroporin and forms ion conductive pores allowing viral particle release. Impairs the generation of type I interferon by down-regulating host TLR3 and TLR7 as well as their downstream signaling pathways. Down-regulates the phosphorylation of host IRF3 via the interaction with host SIRP-alpha, thereby inhibiting IFN-I expression. Interacts with host microtubules.</text>
</comment>
<comment type="subunit">
    <text evidence="3">Forms homooligomers (By similarity). Interacts with host SRC, HCK, FYN, PIK3R3 and GRB2 (via SH3 domain); binding does not activate the kinases (By similarity). Interacts with host AMBP/bikunin and AMBP/alpha-1-microglobulin peptides (By similarity). Interacts with host HPX/hemopexin. Interacts (when phosphorylated) with capsid protein ORF2 (By similarity). Interacts with host TSG101; this interaction plays a role in viral release from the host cell (By similarity). Interacts with host SIRPA; this interaction down-regulates the phosphorylation of host IRF3 (By similarity).</text>
</comment>
<comment type="subcellular location">
    <subcellularLocation>
        <location evidence="3">Host endoplasmic reticulum membrane</location>
        <topology evidence="3">Lipid-anchor</topology>
    </subcellularLocation>
    <subcellularLocation>
        <location evidence="3">Host cytoplasm</location>
        <location evidence="3">Host cytoskeleton</location>
    </subcellularLocation>
    <subcellularLocation>
        <location evidence="3">Virion</location>
    </subcellularLocation>
    <subcellularLocation>
        <location evidence="3">Host cell membrane</location>
        <topology evidence="3">Lipid-anchor</topology>
    </subcellularLocation>
    <text evidence="3">The N-terminal region seems to associate with the cytoskeleton probably via one of its hydrophobic regions. Present on the surface of the membrane-wrapped virions.</text>
</comment>
<comment type="domain">
    <text evidence="3">The PSAP motif is necessary for the release of membrane-wrapped virions from infected cells.</text>
</comment>
<comment type="PTM">
    <text evidence="3">Palmitoylated in the N-terminus.</text>
</comment>
<comment type="miscellaneous">
    <text evidence="3">The viral particles present in feces and bile are non-enveloped, while those in circulating blood and culture supernatants are covered with a cellular membrane (quasi-enveloped).</text>
</comment>
<comment type="similarity">
    <text evidence="5">Belongs to the hepevirus ORF3 protein family.</text>
</comment>
<comment type="sequence caution" evidence="5">
    <conflict type="erroneous initiation">
        <sequence resource="EMBL-CDS" id="AAA45735"/>
    </conflict>
</comment>
<keyword id="KW-0002">3D-structure</keyword>
<keyword id="KW-1032">Host cell membrane</keyword>
<keyword id="KW-1035">Host cytoplasm</keyword>
<keyword id="KW-1037">Host cytoskeleton</keyword>
<keyword id="KW-1038">Host endoplasmic reticulum</keyword>
<keyword id="KW-1043">Host membrane</keyword>
<keyword id="KW-0945">Host-virus interaction</keyword>
<keyword id="KW-1090">Inhibition of host innate immune response by virus</keyword>
<keyword id="KW-0449">Lipoprotein</keyword>
<keyword id="KW-0472">Membrane</keyword>
<keyword id="KW-0597">Phosphoprotein</keyword>
<keyword id="KW-0899">Viral immunoevasion</keyword>
<keyword id="KW-0946">Virion</keyword>
<evidence type="ECO:0000250" key="1"/>
<evidence type="ECO:0000250" key="2">
    <source>
        <dbReference type="UniProtKB" id="Q68984"/>
    </source>
</evidence>
<evidence type="ECO:0000250" key="3">
    <source>
        <dbReference type="UniProtKB" id="Q81870"/>
    </source>
</evidence>
<evidence type="ECO:0000256" key="4">
    <source>
        <dbReference type="SAM" id="MobiDB-lite"/>
    </source>
</evidence>
<evidence type="ECO:0000305" key="5"/>
<reference key="1">
    <citation type="journal article" date="1991" name="Virology">
        <title>Hepatitis E virus (HEV): molecular cloning and sequencing of the full-length viral genome.</title>
        <authorList>
            <person name="Tam A.W."/>
            <person name="Smith M.M."/>
            <person name="Guerra M.E."/>
            <person name="Huang C.-C."/>
            <person name="Bradley D.W."/>
            <person name="Fry K.E."/>
            <person name="Reyes G.R."/>
        </authorList>
    </citation>
    <scope>NUCLEOTIDE SEQUENCE [GENOMIC RNA]</scope>
</reference>